<reference key="1">
    <citation type="journal article" date="2009" name="BMC Genomics">
        <title>Analysis of the Rickettsia africae genome reveals that virulence acquisition in Rickettsia species may be explained by genome reduction.</title>
        <authorList>
            <person name="Fournier P.-E."/>
            <person name="El Karkouri K."/>
            <person name="Leroy Q."/>
            <person name="Robert C."/>
            <person name="Giumelli B."/>
            <person name="Renesto P."/>
            <person name="Socolovschi C."/>
            <person name="Parola P."/>
            <person name="Audic S."/>
            <person name="Raoult D."/>
        </authorList>
    </citation>
    <scope>NUCLEOTIDE SEQUENCE [LARGE SCALE GENOMIC DNA]</scope>
    <source>
        <strain>ESF-5</strain>
    </source>
</reference>
<name>ENGB_RICAE</name>
<gene>
    <name evidence="1" type="primary">engB</name>
    <name type="ordered locus">RAF_ORF0126</name>
</gene>
<protein>
    <recommendedName>
        <fullName evidence="1">Probable GTP-binding protein EngB</fullName>
    </recommendedName>
</protein>
<dbReference type="EMBL" id="CP001612">
    <property type="protein sequence ID" value="ACP53099.1"/>
    <property type="molecule type" value="Genomic_DNA"/>
</dbReference>
<dbReference type="SMR" id="C3PMD9"/>
<dbReference type="KEGG" id="raf:RAF_ORF0126"/>
<dbReference type="HOGENOM" id="CLU_033732_2_0_5"/>
<dbReference type="Proteomes" id="UP000002305">
    <property type="component" value="Chromosome"/>
</dbReference>
<dbReference type="GO" id="GO:0005525">
    <property type="term" value="F:GTP binding"/>
    <property type="evidence" value="ECO:0007669"/>
    <property type="project" value="UniProtKB-UniRule"/>
</dbReference>
<dbReference type="GO" id="GO:0046872">
    <property type="term" value="F:metal ion binding"/>
    <property type="evidence" value="ECO:0007669"/>
    <property type="project" value="UniProtKB-KW"/>
</dbReference>
<dbReference type="GO" id="GO:0000917">
    <property type="term" value="P:division septum assembly"/>
    <property type="evidence" value="ECO:0007669"/>
    <property type="project" value="UniProtKB-KW"/>
</dbReference>
<dbReference type="CDD" id="cd01876">
    <property type="entry name" value="YihA_EngB"/>
    <property type="match status" value="1"/>
</dbReference>
<dbReference type="Gene3D" id="3.40.50.300">
    <property type="entry name" value="P-loop containing nucleotide triphosphate hydrolases"/>
    <property type="match status" value="1"/>
</dbReference>
<dbReference type="HAMAP" id="MF_00321">
    <property type="entry name" value="GTPase_EngB"/>
    <property type="match status" value="1"/>
</dbReference>
<dbReference type="InterPro" id="IPR030393">
    <property type="entry name" value="G_ENGB_dom"/>
</dbReference>
<dbReference type="InterPro" id="IPR006073">
    <property type="entry name" value="GTP-bd"/>
</dbReference>
<dbReference type="InterPro" id="IPR019987">
    <property type="entry name" value="GTP-bd_ribosome_bio_YsxC"/>
</dbReference>
<dbReference type="InterPro" id="IPR027417">
    <property type="entry name" value="P-loop_NTPase"/>
</dbReference>
<dbReference type="NCBIfam" id="TIGR03598">
    <property type="entry name" value="GTPase_YsxC"/>
    <property type="match status" value="1"/>
</dbReference>
<dbReference type="PANTHER" id="PTHR11649:SF13">
    <property type="entry name" value="ENGB-TYPE G DOMAIN-CONTAINING PROTEIN"/>
    <property type="match status" value="1"/>
</dbReference>
<dbReference type="PANTHER" id="PTHR11649">
    <property type="entry name" value="MSS1/TRME-RELATED GTP-BINDING PROTEIN"/>
    <property type="match status" value="1"/>
</dbReference>
<dbReference type="Pfam" id="PF01926">
    <property type="entry name" value="MMR_HSR1"/>
    <property type="match status" value="1"/>
</dbReference>
<dbReference type="SUPFAM" id="SSF52540">
    <property type="entry name" value="P-loop containing nucleoside triphosphate hydrolases"/>
    <property type="match status" value="1"/>
</dbReference>
<dbReference type="PROSITE" id="PS51706">
    <property type="entry name" value="G_ENGB"/>
    <property type="match status" value="1"/>
</dbReference>
<evidence type="ECO:0000255" key="1">
    <source>
        <dbReference type="HAMAP-Rule" id="MF_00321"/>
    </source>
</evidence>
<keyword id="KW-0131">Cell cycle</keyword>
<keyword id="KW-0132">Cell division</keyword>
<keyword id="KW-0342">GTP-binding</keyword>
<keyword id="KW-0460">Magnesium</keyword>
<keyword id="KW-0479">Metal-binding</keyword>
<keyword id="KW-0547">Nucleotide-binding</keyword>
<keyword id="KW-0717">Septation</keyword>
<comment type="function">
    <text evidence="1">Necessary for normal cell division and for the maintenance of normal septation.</text>
</comment>
<comment type="cofactor">
    <cofactor evidence="1">
        <name>Mg(2+)</name>
        <dbReference type="ChEBI" id="CHEBI:18420"/>
    </cofactor>
</comment>
<comment type="similarity">
    <text evidence="1">Belongs to the TRAFAC class TrmE-Era-EngA-EngB-Septin-like GTPase superfamily. EngB GTPase family.</text>
</comment>
<proteinExistence type="inferred from homology"/>
<feature type="chain" id="PRO_1000205136" description="Probable GTP-binding protein EngB">
    <location>
        <begin position="1"/>
        <end position="212"/>
    </location>
</feature>
<feature type="domain" description="EngB-type G" evidence="1">
    <location>
        <begin position="38"/>
        <end position="210"/>
    </location>
</feature>
<feature type="binding site" evidence="1">
    <location>
        <begin position="46"/>
        <end position="53"/>
    </location>
    <ligand>
        <name>GTP</name>
        <dbReference type="ChEBI" id="CHEBI:37565"/>
    </ligand>
</feature>
<feature type="binding site" evidence="1">
    <location>
        <position position="53"/>
    </location>
    <ligand>
        <name>Mg(2+)</name>
        <dbReference type="ChEBI" id="CHEBI:18420"/>
    </ligand>
</feature>
<feature type="binding site" evidence="1">
    <location>
        <begin position="73"/>
        <end position="77"/>
    </location>
    <ligand>
        <name>GTP</name>
        <dbReference type="ChEBI" id="CHEBI:37565"/>
    </ligand>
</feature>
<feature type="binding site" evidence="1">
    <location>
        <position position="75"/>
    </location>
    <ligand>
        <name>Mg(2+)</name>
        <dbReference type="ChEBI" id="CHEBI:18420"/>
    </ligand>
</feature>
<feature type="binding site" evidence="1">
    <location>
        <begin position="91"/>
        <end position="94"/>
    </location>
    <ligand>
        <name>GTP</name>
        <dbReference type="ChEBI" id="CHEBI:37565"/>
    </ligand>
</feature>
<feature type="binding site" evidence="1">
    <location>
        <begin position="158"/>
        <end position="161"/>
    </location>
    <ligand>
        <name>GTP</name>
        <dbReference type="ChEBI" id="CHEBI:37565"/>
    </ligand>
</feature>
<feature type="binding site" evidence="1">
    <location>
        <begin position="189"/>
        <end position="191"/>
    </location>
    <ligand>
        <name>GTP</name>
        <dbReference type="ChEBI" id="CHEBI:37565"/>
    </ligand>
</feature>
<accession>C3PMD9</accession>
<organism>
    <name type="scientific">Rickettsia africae (strain ESF-5)</name>
    <dbReference type="NCBI Taxonomy" id="347255"/>
    <lineage>
        <taxon>Bacteria</taxon>
        <taxon>Pseudomonadati</taxon>
        <taxon>Pseudomonadota</taxon>
        <taxon>Alphaproteobacteria</taxon>
        <taxon>Rickettsiales</taxon>
        <taxon>Rickettsiaceae</taxon>
        <taxon>Rickettsieae</taxon>
        <taxon>Rickettsia</taxon>
        <taxon>spotted fever group</taxon>
    </lineage>
</organism>
<sequence>MTTQKIVPTKSTDGSKLFRHQAKFVAGAMNINQIPNFSLPEIAFVGKSNVGKSSLINTICSNKNLAKVSNTPGRTRQINFFNLADKLIIVDLPGYGFANVPISVKEQWGVLISYYLRNSYNLRLVNLLIDSRRGIKENDKKVADLLLANKREFQIIFTKSDKVTDHKNLHDEAQNFLATLNYSCNVMYVSNRSKEGARELKASLAKCIKPQK</sequence>